<name>TUSC_ECO5E</name>
<proteinExistence type="inferred from homology"/>
<keyword id="KW-0963">Cytoplasm</keyword>
<keyword id="KW-0819">tRNA processing</keyword>
<comment type="function">
    <text evidence="1">Part of a sulfur-relay system required for 2-thiolation of 5-methylaminomethyl-2-thiouridine (mnm(5)s(2)U) at tRNA wobble positions.</text>
</comment>
<comment type="subunit">
    <text evidence="1">Heterohexamer, formed by a dimer of trimers. The hexameric TusBCD complex contains 2 copies each of TusB, TusC and TusD. The TusBCD complex interacts with TusE.</text>
</comment>
<comment type="subcellular location">
    <subcellularLocation>
        <location evidence="1">Cytoplasm</location>
    </subcellularLocation>
</comment>
<comment type="similarity">
    <text evidence="1">Belongs to the DsrF/TusC family.</text>
</comment>
<accession>B5YTQ1</accession>
<protein>
    <recommendedName>
        <fullName evidence="1">Protein TusC</fullName>
    </recommendedName>
    <alternativeName>
        <fullName evidence="1">tRNA 2-thiouridine synthesizing protein C</fullName>
    </alternativeName>
</protein>
<sequence>MKRIAFVFSTVPHGTAAGREGLDALLATSALTDELAVFFIADGVFQLLPGQKPDAVLARDYIATFKLLDLYDIEQCWVCAASLRERGLDPQTPFVVEATPLEADALRRELANYDVILRF</sequence>
<gene>
    <name evidence="1" type="primary">tusC</name>
    <name type="ordered locus">ECH74115_4653</name>
</gene>
<feature type="chain" id="PRO_1000122835" description="Protein TusC">
    <location>
        <begin position="1"/>
        <end position="119"/>
    </location>
</feature>
<organism>
    <name type="scientific">Escherichia coli O157:H7 (strain EC4115 / EHEC)</name>
    <dbReference type="NCBI Taxonomy" id="444450"/>
    <lineage>
        <taxon>Bacteria</taxon>
        <taxon>Pseudomonadati</taxon>
        <taxon>Pseudomonadota</taxon>
        <taxon>Gammaproteobacteria</taxon>
        <taxon>Enterobacterales</taxon>
        <taxon>Enterobacteriaceae</taxon>
        <taxon>Escherichia</taxon>
    </lineage>
</organism>
<dbReference type="EMBL" id="CP001164">
    <property type="protein sequence ID" value="ACI39215.1"/>
    <property type="molecule type" value="Genomic_DNA"/>
</dbReference>
<dbReference type="RefSeq" id="WP_000820735.1">
    <property type="nucleotide sequence ID" value="NC_011353.1"/>
</dbReference>
<dbReference type="SMR" id="B5YTQ1"/>
<dbReference type="KEGG" id="ecf:ECH74115_4653"/>
<dbReference type="HOGENOM" id="CLU_155943_1_0_6"/>
<dbReference type="GO" id="GO:0005737">
    <property type="term" value="C:cytoplasm"/>
    <property type="evidence" value="ECO:0007669"/>
    <property type="project" value="UniProtKB-SubCell"/>
</dbReference>
<dbReference type="GO" id="GO:0008033">
    <property type="term" value="P:tRNA processing"/>
    <property type="evidence" value="ECO:0007669"/>
    <property type="project" value="UniProtKB-UniRule"/>
</dbReference>
<dbReference type="FunFam" id="3.40.1260.10:FF:000004">
    <property type="entry name" value="Sulfurtransferase TusC"/>
    <property type="match status" value="1"/>
</dbReference>
<dbReference type="Gene3D" id="3.40.1260.10">
    <property type="entry name" value="DsrEFH-like"/>
    <property type="match status" value="1"/>
</dbReference>
<dbReference type="HAMAP" id="MF_00389">
    <property type="entry name" value="Thiourid_synth_C"/>
    <property type="match status" value="1"/>
</dbReference>
<dbReference type="InterPro" id="IPR027396">
    <property type="entry name" value="DsrEFH-like"/>
</dbReference>
<dbReference type="InterPro" id="IPR003787">
    <property type="entry name" value="Sulphur_relay_DsrE/F-like"/>
</dbReference>
<dbReference type="InterPro" id="IPR037450">
    <property type="entry name" value="Sulphur_relay_TusC"/>
</dbReference>
<dbReference type="InterPro" id="IPR017462">
    <property type="entry name" value="Sulphur_relay_TusC/DsrF"/>
</dbReference>
<dbReference type="NCBIfam" id="NF001238">
    <property type="entry name" value="PRK00211.1"/>
    <property type="match status" value="1"/>
</dbReference>
<dbReference type="NCBIfam" id="TIGR03010">
    <property type="entry name" value="sulf_tusC_dsrF"/>
    <property type="match status" value="1"/>
</dbReference>
<dbReference type="PANTHER" id="PTHR38780">
    <property type="entry name" value="PROTEIN TUSC"/>
    <property type="match status" value="1"/>
</dbReference>
<dbReference type="PANTHER" id="PTHR38780:SF1">
    <property type="entry name" value="PROTEIN TUSC"/>
    <property type="match status" value="1"/>
</dbReference>
<dbReference type="Pfam" id="PF02635">
    <property type="entry name" value="DsrE"/>
    <property type="match status" value="1"/>
</dbReference>
<dbReference type="SUPFAM" id="SSF75169">
    <property type="entry name" value="DsrEFH-like"/>
    <property type="match status" value="1"/>
</dbReference>
<evidence type="ECO:0000255" key="1">
    <source>
        <dbReference type="HAMAP-Rule" id="MF_00389"/>
    </source>
</evidence>
<reference key="1">
    <citation type="journal article" date="2011" name="Proc. Natl. Acad. Sci. U.S.A.">
        <title>Genomic anatomy of Escherichia coli O157:H7 outbreaks.</title>
        <authorList>
            <person name="Eppinger M."/>
            <person name="Mammel M.K."/>
            <person name="Leclerc J.E."/>
            <person name="Ravel J."/>
            <person name="Cebula T.A."/>
        </authorList>
    </citation>
    <scope>NUCLEOTIDE SEQUENCE [LARGE SCALE GENOMIC DNA]</scope>
    <source>
        <strain>EC4115 / EHEC</strain>
    </source>
</reference>